<sequence>MRSNYLFTSESVSEGHPDKVADQISDAIVDLFLSKDPEARIACETLTTTQLVVLAGEIRCKGVYEDGAWAPGAEEEIERTVRETVKAIGYEQDGFHWQTFRFENNLHGQSAHIAQGVDASGNKDEGAGDQGIMFGFACDETPDLMPATLYYSHKILETMAADRHSGAAPFLEPDTKSQVTLRFDGGKPVAATAIVVSTQHGKGYDEGAKEAELKAYVKKVVAGVLPADLLSDQTVYHINPTGSFEIGGPDGDAGLTGRKIIVDTYGGAAPHGGGAFSGKDPTKVDRSAAYVTRYLAKNIVAAGLARRCTIQLAYAIGVSEPLSLYVDTHGTGTVADDKIEAAIQGIKELGGLTPRGIRTHLGLNKPIYRKTAAYGHFGRKAEGDHFPWERTDLVDKLKAALA</sequence>
<comment type="function">
    <text evidence="1">Catalyzes the formation of S-adenosylmethionine (AdoMet) from methionine and ATP. The overall synthetic reaction is composed of two sequential steps, AdoMet formation and the subsequent tripolyphosphate hydrolysis which occurs prior to release of AdoMet from the enzyme.</text>
</comment>
<comment type="catalytic activity">
    <reaction evidence="1">
        <text>L-methionine + ATP + H2O = S-adenosyl-L-methionine + phosphate + diphosphate</text>
        <dbReference type="Rhea" id="RHEA:21080"/>
        <dbReference type="ChEBI" id="CHEBI:15377"/>
        <dbReference type="ChEBI" id="CHEBI:30616"/>
        <dbReference type="ChEBI" id="CHEBI:33019"/>
        <dbReference type="ChEBI" id="CHEBI:43474"/>
        <dbReference type="ChEBI" id="CHEBI:57844"/>
        <dbReference type="ChEBI" id="CHEBI:59789"/>
        <dbReference type="EC" id="2.5.1.6"/>
    </reaction>
</comment>
<comment type="cofactor">
    <cofactor evidence="1">
        <name>Mg(2+)</name>
        <dbReference type="ChEBI" id="CHEBI:18420"/>
    </cofactor>
    <text evidence="1">Binds 2 divalent ions per subunit.</text>
</comment>
<comment type="cofactor">
    <cofactor evidence="1">
        <name>K(+)</name>
        <dbReference type="ChEBI" id="CHEBI:29103"/>
    </cofactor>
    <text evidence="1">Binds 1 potassium ion per subunit.</text>
</comment>
<comment type="pathway">
    <text evidence="1">Amino-acid biosynthesis; S-adenosyl-L-methionine biosynthesis; S-adenosyl-L-methionine from L-methionine: step 1/1.</text>
</comment>
<comment type="subunit">
    <text evidence="1">Homotetramer; dimer of dimers.</text>
</comment>
<comment type="subcellular location">
    <subcellularLocation>
        <location evidence="1">Cytoplasm</location>
    </subcellularLocation>
</comment>
<comment type="similarity">
    <text evidence="1">Belongs to the AdoMet synthase family.</text>
</comment>
<dbReference type="EC" id="2.5.1.6" evidence="1"/>
<dbReference type="EMBL" id="CP000699">
    <property type="protein sequence ID" value="ABQ69719.1"/>
    <property type="molecule type" value="Genomic_DNA"/>
</dbReference>
<dbReference type="SMR" id="A5VBQ3"/>
<dbReference type="STRING" id="392499.Swit_3373"/>
<dbReference type="PaxDb" id="392499-Swit_3373"/>
<dbReference type="KEGG" id="swi:Swit_3373"/>
<dbReference type="eggNOG" id="COG0192">
    <property type="taxonomic scope" value="Bacteria"/>
</dbReference>
<dbReference type="HOGENOM" id="CLU_041802_1_1_5"/>
<dbReference type="OrthoDB" id="9801686at2"/>
<dbReference type="UniPathway" id="UPA00315">
    <property type="reaction ID" value="UER00080"/>
</dbReference>
<dbReference type="Proteomes" id="UP000001989">
    <property type="component" value="Chromosome"/>
</dbReference>
<dbReference type="GO" id="GO:0005737">
    <property type="term" value="C:cytoplasm"/>
    <property type="evidence" value="ECO:0007669"/>
    <property type="project" value="UniProtKB-SubCell"/>
</dbReference>
<dbReference type="GO" id="GO:0005524">
    <property type="term" value="F:ATP binding"/>
    <property type="evidence" value="ECO:0007669"/>
    <property type="project" value="UniProtKB-UniRule"/>
</dbReference>
<dbReference type="GO" id="GO:0000287">
    <property type="term" value="F:magnesium ion binding"/>
    <property type="evidence" value="ECO:0007669"/>
    <property type="project" value="UniProtKB-UniRule"/>
</dbReference>
<dbReference type="GO" id="GO:0004478">
    <property type="term" value="F:methionine adenosyltransferase activity"/>
    <property type="evidence" value="ECO:0007669"/>
    <property type="project" value="UniProtKB-UniRule"/>
</dbReference>
<dbReference type="GO" id="GO:0006730">
    <property type="term" value="P:one-carbon metabolic process"/>
    <property type="evidence" value="ECO:0007669"/>
    <property type="project" value="UniProtKB-KW"/>
</dbReference>
<dbReference type="GO" id="GO:0006556">
    <property type="term" value="P:S-adenosylmethionine biosynthetic process"/>
    <property type="evidence" value="ECO:0007669"/>
    <property type="project" value="UniProtKB-UniRule"/>
</dbReference>
<dbReference type="CDD" id="cd18079">
    <property type="entry name" value="S-AdoMet_synt"/>
    <property type="match status" value="1"/>
</dbReference>
<dbReference type="Gene3D" id="3.30.300.10">
    <property type="match status" value="3"/>
</dbReference>
<dbReference type="HAMAP" id="MF_00086">
    <property type="entry name" value="S_AdoMet_synth1"/>
    <property type="match status" value="1"/>
</dbReference>
<dbReference type="InterPro" id="IPR022631">
    <property type="entry name" value="ADOMET_SYNTHASE_CS"/>
</dbReference>
<dbReference type="InterPro" id="IPR022630">
    <property type="entry name" value="S-AdoMet_synt_C"/>
</dbReference>
<dbReference type="InterPro" id="IPR022629">
    <property type="entry name" value="S-AdoMet_synt_central"/>
</dbReference>
<dbReference type="InterPro" id="IPR022628">
    <property type="entry name" value="S-AdoMet_synt_N"/>
</dbReference>
<dbReference type="InterPro" id="IPR002133">
    <property type="entry name" value="S-AdoMet_synthetase"/>
</dbReference>
<dbReference type="InterPro" id="IPR022636">
    <property type="entry name" value="S-AdoMet_synthetase_sfam"/>
</dbReference>
<dbReference type="NCBIfam" id="TIGR01034">
    <property type="entry name" value="metK"/>
    <property type="match status" value="1"/>
</dbReference>
<dbReference type="PANTHER" id="PTHR11964">
    <property type="entry name" value="S-ADENOSYLMETHIONINE SYNTHETASE"/>
    <property type="match status" value="1"/>
</dbReference>
<dbReference type="Pfam" id="PF02773">
    <property type="entry name" value="S-AdoMet_synt_C"/>
    <property type="match status" value="1"/>
</dbReference>
<dbReference type="Pfam" id="PF02772">
    <property type="entry name" value="S-AdoMet_synt_M"/>
    <property type="match status" value="1"/>
</dbReference>
<dbReference type="Pfam" id="PF00438">
    <property type="entry name" value="S-AdoMet_synt_N"/>
    <property type="match status" value="1"/>
</dbReference>
<dbReference type="PIRSF" id="PIRSF000497">
    <property type="entry name" value="MAT"/>
    <property type="match status" value="1"/>
</dbReference>
<dbReference type="SUPFAM" id="SSF55973">
    <property type="entry name" value="S-adenosylmethionine synthetase"/>
    <property type="match status" value="3"/>
</dbReference>
<dbReference type="PROSITE" id="PS00376">
    <property type="entry name" value="ADOMET_SYNTHASE_1"/>
    <property type="match status" value="1"/>
</dbReference>
<dbReference type="PROSITE" id="PS00377">
    <property type="entry name" value="ADOMET_SYNTHASE_2"/>
    <property type="match status" value="1"/>
</dbReference>
<gene>
    <name evidence="1" type="primary">metK</name>
    <name type="ordered locus">Swit_3373</name>
</gene>
<evidence type="ECO:0000255" key="1">
    <source>
        <dbReference type="HAMAP-Rule" id="MF_00086"/>
    </source>
</evidence>
<protein>
    <recommendedName>
        <fullName evidence="1">S-adenosylmethionine synthase</fullName>
        <shortName evidence="1">AdoMet synthase</shortName>
        <ecNumber evidence="1">2.5.1.6</ecNumber>
    </recommendedName>
    <alternativeName>
        <fullName evidence="1">MAT</fullName>
    </alternativeName>
    <alternativeName>
        <fullName evidence="1">Methionine adenosyltransferase</fullName>
    </alternativeName>
</protein>
<feature type="chain" id="PRO_1000007956" description="S-adenosylmethionine synthase">
    <location>
        <begin position="1"/>
        <end position="402"/>
    </location>
</feature>
<feature type="region of interest" description="Flexible loop" evidence="1">
    <location>
        <begin position="109"/>
        <end position="119"/>
    </location>
</feature>
<feature type="binding site" description="in other chain" evidence="1">
    <location>
        <position position="16"/>
    </location>
    <ligand>
        <name>ATP</name>
        <dbReference type="ChEBI" id="CHEBI:30616"/>
        <note>ligand shared between two neighboring subunits</note>
    </ligand>
</feature>
<feature type="binding site" evidence="1">
    <location>
        <position position="18"/>
    </location>
    <ligand>
        <name>Mg(2+)</name>
        <dbReference type="ChEBI" id="CHEBI:18420"/>
    </ligand>
</feature>
<feature type="binding site" evidence="1">
    <location>
        <position position="44"/>
    </location>
    <ligand>
        <name>K(+)</name>
        <dbReference type="ChEBI" id="CHEBI:29103"/>
    </ligand>
</feature>
<feature type="binding site" description="in other chain" evidence="1">
    <location>
        <position position="57"/>
    </location>
    <ligand>
        <name>L-methionine</name>
        <dbReference type="ChEBI" id="CHEBI:57844"/>
        <note>ligand shared between two neighboring subunits</note>
    </ligand>
</feature>
<feature type="binding site" description="in other chain" evidence="1">
    <location>
        <position position="109"/>
    </location>
    <ligand>
        <name>L-methionine</name>
        <dbReference type="ChEBI" id="CHEBI:57844"/>
        <note>ligand shared between two neighboring subunits</note>
    </ligand>
</feature>
<feature type="binding site" description="in other chain" evidence="1">
    <location>
        <begin position="174"/>
        <end position="176"/>
    </location>
    <ligand>
        <name>ATP</name>
        <dbReference type="ChEBI" id="CHEBI:30616"/>
        <note>ligand shared between two neighboring subunits</note>
    </ligand>
</feature>
<feature type="binding site" evidence="1">
    <location>
        <position position="252"/>
    </location>
    <ligand>
        <name>ATP</name>
        <dbReference type="ChEBI" id="CHEBI:30616"/>
        <note>ligand shared between two neighboring subunits</note>
    </ligand>
</feature>
<feature type="binding site" evidence="1">
    <location>
        <position position="252"/>
    </location>
    <ligand>
        <name>L-methionine</name>
        <dbReference type="ChEBI" id="CHEBI:57844"/>
        <note>ligand shared between two neighboring subunits</note>
    </ligand>
</feature>
<feature type="binding site" description="in other chain" evidence="1">
    <location>
        <begin position="258"/>
        <end position="259"/>
    </location>
    <ligand>
        <name>ATP</name>
        <dbReference type="ChEBI" id="CHEBI:30616"/>
        <note>ligand shared between two neighboring subunits</note>
    </ligand>
</feature>
<feature type="binding site" evidence="1">
    <location>
        <position position="275"/>
    </location>
    <ligand>
        <name>ATP</name>
        <dbReference type="ChEBI" id="CHEBI:30616"/>
        <note>ligand shared between two neighboring subunits</note>
    </ligand>
</feature>
<feature type="binding site" evidence="1">
    <location>
        <position position="279"/>
    </location>
    <ligand>
        <name>ATP</name>
        <dbReference type="ChEBI" id="CHEBI:30616"/>
        <note>ligand shared between two neighboring subunits</note>
    </ligand>
</feature>
<feature type="binding site" description="in other chain" evidence="1">
    <location>
        <position position="283"/>
    </location>
    <ligand>
        <name>L-methionine</name>
        <dbReference type="ChEBI" id="CHEBI:57844"/>
        <note>ligand shared between two neighboring subunits</note>
    </ligand>
</feature>
<reference key="1">
    <citation type="journal article" date="2010" name="J. Bacteriol.">
        <title>Genome sequence of the dioxin-mineralizing bacterium Sphingomonas wittichii RW1.</title>
        <authorList>
            <person name="Miller T.R."/>
            <person name="Delcher A.L."/>
            <person name="Salzberg S.L."/>
            <person name="Saunders E."/>
            <person name="Detter J.C."/>
            <person name="Halden R.U."/>
        </authorList>
    </citation>
    <scope>NUCLEOTIDE SEQUENCE [LARGE SCALE GENOMIC DNA]</scope>
    <source>
        <strain>DSM 6014 / CCUG 31198 / JCM 15750 / NBRC 105917 / EY 4224 / RW1</strain>
    </source>
</reference>
<keyword id="KW-0067">ATP-binding</keyword>
<keyword id="KW-0963">Cytoplasm</keyword>
<keyword id="KW-0460">Magnesium</keyword>
<keyword id="KW-0479">Metal-binding</keyword>
<keyword id="KW-0547">Nucleotide-binding</keyword>
<keyword id="KW-0554">One-carbon metabolism</keyword>
<keyword id="KW-0630">Potassium</keyword>
<keyword id="KW-1185">Reference proteome</keyword>
<keyword id="KW-0808">Transferase</keyword>
<accession>A5VBQ3</accession>
<name>METK_RHIWR</name>
<organism>
    <name type="scientific">Rhizorhabdus wittichii (strain DSM 6014 / CCUG 31198 / JCM 15750 / NBRC 105917 / EY 4224 / RW1)</name>
    <name type="common">Sphingomonas wittichii</name>
    <dbReference type="NCBI Taxonomy" id="392499"/>
    <lineage>
        <taxon>Bacteria</taxon>
        <taxon>Pseudomonadati</taxon>
        <taxon>Pseudomonadota</taxon>
        <taxon>Alphaproteobacteria</taxon>
        <taxon>Sphingomonadales</taxon>
        <taxon>Sphingomonadaceae</taxon>
        <taxon>Rhizorhabdus</taxon>
    </lineage>
</organism>
<proteinExistence type="inferred from homology"/>